<feature type="chain" id="PRO_0000408962" description="Macrolide efflux protein A">
    <location>
        <begin position="1" status="less than"/>
        <end position="323" status="greater than"/>
    </location>
</feature>
<feature type="transmembrane region" description="Helical" evidence="2">
    <location>
        <begin position="6"/>
        <end position="26"/>
    </location>
</feature>
<feature type="transmembrane region" description="Helical" evidence="2">
    <location>
        <begin position="51"/>
        <end position="71"/>
    </location>
</feature>
<feature type="transmembrane region" description="Helical" evidence="2">
    <location>
        <begin position="105"/>
        <end position="125"/>
    </location>
</feature>
<feature type="transmembrane region" description="Helical" evidence="2">
    <location>
        <begin position="128"/>
        <end position="148"/>
    </location>
</feature>
<feature type="transmembrane region" description="Helical" evidence="2">
    <location>
        <begin position="182"/>
        <end position="202"/>
    </location>
</feature>
<feature type="transmembrane region" description="Helical" evidence="2">
    <location>
        <begin position="219"/>
        <end position="239"/>
    </location>
</feature>
<feature type="transmembrane region" description="Helical" evidence="2">
    <location>
        <begin position="245"/>
        <end position="265"/>
    </location>
</feature>
<feature type="transmembrane region" description="Helical" evidence="2">
    <location>
        <begin position="270"/>
        <end position="290"/>
    </location>
</feature>
<feature type="transmembrane region" description="Helical" evidence="2">
    <location>
        <begin position="303"/>
        <end position="323"/>
    </location>
</feature>
<feature type="non-terminal residue" evidence="4">
    <location>
        <position position="1"/>
    </location>
</feature>
<feature type="non-terminal residue" evidence="4">
    <location>
        <position position="323"/>
    </location>
</feature>
<reference evidence="4" key="1">
    <citation type="submission" date="2011-01" db="UniProtKB">
        <title>Involvement of TEM-1 type beta-lactamase and efflux pumps in the defense mechanisms of Enterococcus faecalis.</title>
        <authorList>
            <person name="Chouchani C."/>
            <person name="Marrakchi R."/>
            <person name="Aboulkacem N."/>
            <person name="Ferchichi L."/>
            <person name="Karray A."/>
            <person name="El Salabi A."/>
        </authorList>
    </citation>
    <scope>PROTEIN SEQUENCE</scope>
    <source>
        <strain>Clinical isolate</strain>
    </source>
</reference>
<proteinExistence type="evidence at protein level"/>
<accession>P86889</accession>
<keyword id="KW-0046">Antibiotic resistance</keyword>
<keyword id="KW-1003">Cell membrane</keyword>
<keyword id="KW-0903">Direct protein sequencing</keyword>
<keyword id="KW-0472">Membrane</keyword>
<keyword id="KW-0812">Transmembrane</keyword>
<keyword id="KW-1133">Transmembrane helix</keyword>
<keyword id="KW-0813">Transport</keyword>
<protein>
    <recommendedName>
        <fullName evidence="3">Macrolide efflux protein A</fullName>
    </recommendedName>
</protein>
<evidence type="ECO:0000250" key="1">
    <source>
        <dbReference type="UniProtKB" id="P95827"/>
    </source>
</evidence>
<evidence type="ECO:0000255" key="2"/>
<evidence type="ECO:0000303" key="3">
    <source ref="1"/>
</evidence>
<evidence type="ECO:0000305" key="4"/>
<comment type="function">
    <text evidence="1">Confers resistance to 14-membered macrolides including erythromycin and to 15-membered macrolides but not to 16-membered macrolides, lincosamides or analogs of streptogramin B. May function as an efflux pump to regulate intracellular macrolide levels (By similarity).</text>
</comment>
<comment type="subcellular location">
    <subcellularLocation>
        <location evidence="2">Cell membrane</location>
        <topology evidence="2">Multi-pass membrane protein</topology>
    </subcellularLocation>
</comment>
<comment type="similarity">
    <text evidence="4">Belongs to the major facilitator superfamily. Drug:H(+) antiporter-3 (DHA3) (TC 2.A.1.21) family.</text>
</comment>
<organism>
    <name type="scientific">Enterococcus faecalis</name>
    <name type="common">Streptococcus faecalis</name>
    <dbReference type="NCBI Taxonomy" id="1351"/>
    <lineage>
        <taxon>Bacteria</taxon>
        <taxon>Bacillati</taxon>
        <taxon>Bacillota</taxon>
        <taxon>Bacilli</taxon>
        <taxon>Lactobacillales</taxon>
        <taxon>Enterococcaceae</taxon>
        <taxon>Enterococcus</taxon>
    </lineage>
</organism>
<name>MEFA_ENTFL</name>
<sequence length="323" mass="34947">MGSAMVLSMSLLGFLPYAVFGPAIGVLVDRHDRKKIMIGADLIIAAAGSVLTIVAFYMELPVWMVMIVLFIRSIGTAFHTPALNAVTPLLVPEEQLTKCAGYSQSLQSISYIVSPAVAALLYSVWELNAIIAIDVLGAVIASITVLIVRIPKLGDRVQSLDPNFIREMQEGMAVLRQNKGLFALLLVGTLYMFVYMPINALFPLISMDYFNGTPVHISITEISFASGMLIGGLLLGLFGNYQKRILLITASIFMMGISLTISGLLPQSGFFIFVVCSAIMGLSVPFYSGVQTALFQEKIKPEYLGRVFSLTGSIMSLAMPIGL</sequence>
<gene>
    <name type="primary">mefA</name>
</gene>
<dbReference type="SMR" id="P86889"/>
<dbReference type="GO" id="GO:0005886">
    <property type="term" value="C:plasma membrane"/>
    <property type="evidence" value="ECO:0007669"/>
    <property type="project" value="UniProtKB-SubCell"/>
</dbReference>
<dbReference type="GO" id="GO:0022857">
    <property type="term" value="F:transmembrane transporter activity"/>
    <property type="evidence" value="ECO:0007669"/>
    <property type="project" value="InterPro"/>
</dbReference>
<dbReference type="GO" id="GO:0046677">
    <property type="term" value="P:response to antibiotic"/>
    <property type="evidence" value="ECO:0007669"/>
    <property type="project" value="UniProtKB-KW"/>
</dbReference>
<dbReference type="CDD" id="cd06173">
    <property type="entry name" value="MFS_MefA_like"/>
    <property type="match status" value="1"/>
</dbReference>
<dbReference type="Gene3D" id="1.20.1250.20">
    <property type="entry name" value="MFS general substrate transporter like domains"/>
    <property type="match status" value="1"/>
</dbReference>
<dbReference type="InterPro" id="IPR004751">
    <property type="entry name" value="Drug_antiport"/>
</dbReference>
<dbReference type="InterPro" id="IPR011701">
    <property type="entry name" value="MFS"/>
</dbReference>
<dbReference type="InterPro" id="IPR020846">
    <property type="entry name" value="MFS_dom"/>
</dbReference>
<dbReference type="InterPro" id="IPR036259">
    <property type="entry name" value="MFS_trans_sf"/>
</dbReference>
<dbReference type="NCBIfam" id="TIGR00900">
    <property type="entry name" value="2A0121"/>
    <property type="match status" value="1"/>
</dbReference>
<dbReference type="NCBIfam" id="NF000245">
    <property type="entry name" value="macrolide_MefA"/>
    <property type="match status" value="1"/>
</dbReference>
<dbReference type="PANTHER" id="PTHR43266">
    <property type="entry name" value="MACROLIDE-EFFLUX PROTEIN"/>
    <property type="match status" value="1"/>
</dbReference>
<dbReference type="PANTHER" id="PTHR43266:SF2">
    <property type="entry name" value="MAJOR FACILITATOR SUPERFAMILY (MFS) PROFILE DOMAIN-CONTAINING PROTEIN"/>
    <property type="match status" value="1"/>
</dbReference>
<dbReference type="Pfam" id="PF07690">
    <property type="entry name" value="MFS_1"/>
    <property type="match status" value="1"/>
</dbReference>
<dbReference type="SUPFAM" id="SSF103473">
    <property type="entry name" value="MFS general substrate transporter"/>
    <property type="match status" value="1"/>
</dbReference>
<dbReference type="PROSITE" id="PS50850">
    <property type="entry name" value="MFS"/>
    <property type="match status" value="2"/>
</dbReference>